<organism>
    <name type="scientific">Halalkalibacterium halodurans (strain ATCC BAA-125 / DSM 18197 / FERM 7344 / JCM 9153 / C-125)</name>
    <name type="common">Bacillus halodurans</name>
    <dbReference type="NCBI Taxonomy" id="272558"/>
    <lineage>
        <taxon>Bacteria</taxon>
        <taxon>Bacillati</taxon>
        <taxon>Bacillota</taxon>
        <taxon>Bacilli</taxon>
        <taxon>Bacillales</taxon>
        <taxon>Bacillaceae</taxon>
        <taxon>Halalkalibacterium (ex Joshi et al. 2022)</taxon>
    </lineage>
</organism>
<accession>Q05203</accession>
<accession>Q9JPV4</accession>
<reference key="1">
    <citation type="journal article" date="1992" name="J. Gen. Microbiol.">
        <title>Analysis of the flagellin (hag) gene of alkalophilic Bacillus sp. C-125.</title>
        <authorList>
            <person name="Sakamoto Y."/>
            <person name="Sutherland K.J."/>
            <person name="Tamaoka J."/>
            <person name="Kobayashi T."/>
            <person name="Kudo T."/>
            <person name="Horikoshi K."/>
        </authorList>
    </citation>
    <scope>NUCLEOTIDE SEQUENCE [GENOMIC DNA]</scope>
    <scope>PROTEIN SEQUENCE OF 1-10</scope>
    <source>
        <strain>ATCC BAA-125 / DSM 18197 / FERM 7344 / JCM 9153 / C-125</strain>
    </source>
</reference>
<reference key="2">
    <citation type="journal article" date="2000" name="Nucleic Acids Res.">
        <title>Complete genome sequence of the alkaliphilic bacterium Bacillus halodurans and genomic sequence comparison with Bacillus subtilis.</title>
        <authorList>
            <person name="Takami H."/>
            <person name="Nakasone K."/>
            <person name="Takaki Y."/>
            <person name="Maeno G."/>
            <person name="Sasaki R."/>
            <person name="Masui N."/>
            <person name="Fuji F."/>
            <person name="Hirama C."/>
            <person name="Nakamura Y."/>
            <person name="Ogasawara N."/>
            <person name="Kuhara S."/>
            <person name="Horikoshi K."/>
        </authorList>
    </citation>
    <scope>NUCLEOTIDE SEQUENCE [LARGE SCALE GENOMIC DNA]</scope>
    <source>
        <strain>ATCC BAA-125 / DSM 18197 / FERM 7344 / JCM 9153 / C-125</strain>
    </source>
</reference>
<reference key="3">
    <citation type="journal article" date="1992" name="Biosci. Biotechnol. Biochem.">
        <title>pH-dependent flagella formation by facultative alkaliphilic Bacillus sp. C-125.</title>
        <authorList>
            <person name="Aono R."/>
            <person name="Ogino H."/>
            <person name="Horikoshi K."/>
        </authorList>
    </citation>
    <scope>PROTEIN SEQUENCE OF 1-20</scope>
    <source>
        <strain>ATCC BAA-125 / DSM 18197 / FERM 7344 / JCM 9153 / C-125</strain>
    </source>
</reference>
<comment type="function">
    <text>Flagellin is the subunit protein which polymerizes to form the filaments of bacterial flagella.</text>
</comment>
<comment type="subcellular location">
    <subcellularLocation>
        <location>Secreted</location>
    </subcellularLocation>
    <subcellularLocation>
        <location>Bacterial flagellum</location>
    </subcellularLocation>
</comment>
<comment type="similarity">
    <text evidence="1">Belongs to the bacterial flagellin family.</text>
</comment>
<feature type="chain" id="PRO_0000182586" description="Flagellin">
    <location>
        <begin position="1"/>
        <end position="272"/>
    </location>
</feature>
<protein>
    <recommendedName>
        <fullName>Flagellin</fullName>
    </recommendedName>
</protein>
<name>FLA_HALH5</name>
<proteinExistence type="evidence at protein level"/>
<sequence length="272" mass="30009">MIINHNLPAMNAHRNMGINLNQGQKAMEKLSSGLRINRAGDDAAGLAISEKMRAQIRGLDQASRNSQDGISLIQTAEGALDEVHSILQRMRELAVQSSNETNVEQDQAALNDEFQQLVEEIERIKDTTQFNTQKLLDDTVDTVQLQVGANSGELIELDLTKVDLSAIHTALAAEDITDHTNAQSAIDAIDEQLKAVSEGRSYLGAMQNRLEHTIKNLDNASENLQAAESRIRDVDMAKEMMEFTRTNILNQASQAMLAQANQQPQAVLQLLR</sequence>
<keyword id="KW-0975">Bacterial flagellum</keyword>
<keyword id="KW-0903">Direct protein sequencing</keyword>
<keyword id="KW-1185">Reference proteome</keyword>
<keyword id="KW-0964">Secreted</keyword>
<evidence type="ECO:0000305" key="1"/>
<dbReference type="EMBL" id="D10063">
    <property type="protein sequence ID" value="BAA00952.1"/>
    <property type="molecule type" value="Genomic_DNA"/>
</dbReference>
<dbReference type="EMBL" id="BA000004">
    <property type="protein sequence ID" value="BAB07335.1"/>
    <property type="molecule type" value="Genomic_DNA"/>
</dbReference>
<dbReference type="PIR" id="A47684">
    <property type="entry name" value="A47684"/>
</dbReference>
<dbReference type="PIR" id="H84101">
    <property type="entry name" value="H84101"/>
</dbReference>
<dbReference type="RefSeq" id="WP_010899744.1">
    <property type="nucleotide sequence ID" value="NC_002570.2"/>
</dbReference>
<dbReference type="SMR" id="Q05203"/>
<dbReference type="STRING" id="272558.gene:10729529"/>
<dbReference type="KEGG" id="bha:BH3616"/>
<dbReference type="eggNOG" id="COG1344">
    <property type="taxonomic scope" value="Bacteria"/>
</dbReference>
<dbReference type="HOGENOM" id="CLU_011142_2_0_9"/>
<dbReference type="OrthoDB" id="9796789at2"/>
<dbReference type="Proteomes" id="UP000001258">
    <property type="component" value="Chromosome"/>
</dbReference>
<dbReference type="GO" id="GO:0009288">
    <property type="term" value="C:bacterial-type flagellum"/>
    <property type="evidence" value="ECO:0007669"/>
    <property type="project" value="UniProtKB-SubCell"/>
</dbReference>
<dbReference type="GO" id="GO:0005576">
    <property type="term" value="C:extracellular region"/>
    <property type="evidence" value="ECO:0007669"/>
    <property type="project" value="UniProtKB-SubCell"/>
</dbReference>
<dbReference type="GO" id="GO:0005198">
    <property type="term" value="F:structural molecule activity"/>
    <property type="evidence" value="ECO:0007669"/>
    <property type="project" value="InterPro"/>
</dbReference>
<dbReference type="Gene3D" id="2.170.280.10">
    <property type="entry name" value="f41 fragment of flagellin, middle domain"/>
    <property type="match status" value="1"/>
</dbReference>
<dbReference type="Gene3D" id="1.20.1330.10">
    <property type="entry name" value="f41 fragment of flagellin, N-terminal domain"/>
    <property type="match status" value="2"/>
</dbReference>
<dbReference type="Gene3D" id="6.10.10.10">
    <property type="entry name" value="Flagellar export chaperone, C-terminal domain"/>
    <property type="match status" value="1"/>
</dbReference>
<dbReference type="InterPro" id="IPR001492">
    <property type="entry name" value="Flagellin"/>
</dbReference>
<dbReference type="InterPro" id="IPR046358">
    <property type="entry name" value="Flagellin_C"/>
</dbReference>
<dbReference type="InterPro" id="IPR042187">
    <property type="entry name" value="Flagellin_C_sub2"/>
</dbReference>
<dbReference type="InterPro" id="IPR001029">
    <property type="entry name" value="Flagellin_N"/>
</dbReference>
<dbReference type="PANTHER" id="PTHR42792">
    <property type="entry name" value="FLAGELLIN"/>
    <property type="match status" value="1"/>
</dbReference>
<dbReference type="PANTHER" id="PTHR42792:SF2">
    <property type="entry name" value="FLAGELLIN"/>
    <property type="match status" value="1"/>
</dbReference>
<dbReference type="Pfam" id="PF00700">
    <property type="entry name" value="Flagellin_C"/>
    <property type="match status" value="1"/>
</dbReference>
<dbReference type="Pfam" id="PF00669">
    <property type="entry name" value="Flagellin_N"/>
    <property type="match status" value="1"/>
</dbReference>
<dbReference type="PRINTS" id="PR00207">
    <property type="entry name" value="FLAGELLIN"/>
</dbReference>
<dbReference type="SUPFAM" id="SSF64518">
    <property type="entry name" value="Phase 1 flagellin"/>
    <property type="match status" value="1"/>
</dbReference>
<gene>
    <name type="primary">hag</name>
    <name type="ordered locus">BH3616</name>
</gene>